<evidence type="ECO:0000255" key="1">
    <source>
        <dbReference type="HAMAP-Rule" id="MF_01356"/>
    </source>
</evidence>
<accession>Q14FF3</accession>
<geneLocation type="chloroplast"/>
<proteinExistence type="inferred from homology"/>
<sequence>MNSIEFPLLDRTTPISVISTTSNDLSNWSRLSSLWPLLYGTSCCFIEFASLIGSRFDFDRYGLVPRSSPRQADLILTAGTVTMKMAPSLVRLYEQMPEQKYVIAMGACTITGGMFSTDSYSTVRGVDKLIPVDVYLPGCPPKPEAIIDAITKLRKKISREIYEDRIRSQQGNRCFTTNHKFHIGRTTNTGNYDQGLLYQPPSTSKIAPEAFFKYKKSVSSSELVN</sequence>
<protein>
    <recommendedName>
        <fullName evidence="1">NAD(P)H-quinone oxidoreductase subunit K, chloroplastic</fullName>
        <ecNumber evidence="1">7.1.1.-</ecNumber>
    </recommendedName>
    <alternativeName>
        <fullName evidence="1">NAD(P)H dehydrogenase subunit K</fullName>
    </alternativeName>
    <alternativeName>
        <fullName evidence="1">NADH-plastoquinone oxidoreductase subunit K</fullName>
    </alternativeName>
</protein>
<reference key="1">
    <citation type="submission" date="2005-03" db="EMBL/GenBank/DDBJ databases">
        <title>Complete structure of the chloroplast genome of Populus alba.</title>
        <authorList>
            <person name="Okumura S."/>
            <person name="Yamashita A."/>
            <person name="Kanamoto H."/>
            <person name="Hattori M."/>
            <person name="Takase H."/>
            <person name="Tomizawa K."/>
        </authorList>
    </citation>
    <scope>NUCLEOTIDE SEQUENCE [LARGE SCALE GENOMIC DNA]</scope>
</reference>
<name>NDHK_POPAL</name>
<keyword id="KW-0004">4Fe-4S</keyword>
<keyword id="KW-0150">Chloroplast</keyword>
<keyword id="KW-0408">Iron</keyword>
<keyword id="KW-0411">Iron-sulfur</keyword>
<keyword id="KW-0472">Membrane</keyword>
<keyword id="KW-0479">Metal-binding</keyword>
<keyword id="KW-0520">NAD</keyword>
<keyword id="KW-0521">NADP</keyword>
<keyword id="KW-0934">Plastid</keyword>
<keyword id="KW-0618">Plastoquinone</keyword>
<keyword id="KW-0874">Quinone</keyword>
<keyword id="KW-0793">Thylakoid</keyword>
<keyword id="KW-1278">Translocase</keyword>
<keyword id="KW-0813">Transport</keyword>
<dbReference type="EC" id="7.1.1.-" evidence="1"/>
<dbReference type="EMBL" id="AP008956">
    <property type="protein sequence ID" value="BAE97209.1"/>
    <property type="molecule type" value="Genomic_DNA"/>
</dbReference>
<dbReference type="RefSeq" id="YP_665562.1">
    <property type="nucleotide sequence ID" value="NC_008235.1"/>
</dbReference>
<dbReference type="SMR" id="Q14FF3"/>
<dbReference type="GeneID" id="4178237"/>
<dbReference type="KEGG" id="palz:4178237"/>
<dbReference type="OrthoDB" id="1335at3646"/>
<dbReference type="GO" id="GO:0009535">
    <property type="term" value="C:chloroplast thylakoid membrane"/>
    <property type="evidence" value="ECO:0007669"/>
    <property type="project" value="UniProtKB-SubCell"/>
</dbReference>
<dbReference type="GO" id="GO:0045271">
    <property type="term" value="C:respiratory chain complex I"/>
    <property type="evidence" value="ECO:0007669"/>
    <property type="project" value="TreeGrafter"/>
</dbReference>
<dbReference type="GO" id="GO:0051539">
    <property type="term" value="F:4 iron, 4 sulfur cluster binding"/>
    <property type="evidence" value="ECO:0007669"/>
    <property type="project" value="UniProtKB-KW"/>
</dbReference>
<dbReference type="GO" id="GO:0005506">
    <property type="term" value="F:iron ion binding"/>
    <property type="evidence" value="ECO:0007669"/>
    <property type="project" value="UniProtKB-UniRule"/>
</dbReference>
<dbReference type="GO" id="GO:0008137">
    <property type="term" value="F:NADH dehydrogenase (ubiquinone) activity"/>
    <property type="evidence" value="ECO:0007669"/>
    <property type="project" value="InterPro"/>
</dbReference>
<dbReference type="GO" id="GO:0048038">
    <property type="term" value="F:quinone binding"/>
    <property type="evidence" value="ECO:0007669"/>
    <property type="project" value="UniProtKB-KW"/>
</dbReference>
<dbReference type="GO" id="GO:0009060">
    <property type="term" value="P:aerobic respiration"/>
    <property type="evidence" value="ECO:0007669"/>
    <property type="project" value="TreeGrafter"/>
</dbReference>
<dbReference type="GO" id="GO:0015990">
    <property type="term" value="P:electron transport coupled proton transport"/>
    <property type="evidence" value="ECO:0007669"/>
    <property type="project" value="TreeGrafter"/>
</dbReference>
<dbReference type="GO" id="GO:0019684">
    <property type="term" value="P:photosynthesis, light reaction"/>
    <property type="evidence" value="ECO:0007669"/>
    <property type="project" value="UniProtKB-UniRule"/>
</dbReference>
<dbReference type="FunFam" id="3.40.50.12280:FF:000003">
    <property type="entry name" value="NAD(P)H-quinone oxidoreductase subunit K, chloroplastic"/>
    <property type="match status" value="1"/>
</dbReference>
<dbReference type="Gene3D" id="3.40.50.12280">
    <property type="match status" value="1"/>
</dbReference>
<dbReference type="HAMAP" id="MF_01356">
    <property type="entry name" value="NDH1_NuoB"/>
    <property type="match status" value="1"/>
</dbReference>
<dbReference type="InterPro" id="IPR006137">
    <property type="entry name" value="NADH_UbQ_OxRdtase-like_20kDa"/>
</dbReference>
<dbReference type="InterPro" id="IPR006138">
    <property type="entry name" value="NADH_UQ_OxRdtase_20Kd_su"/>
</dbReference>
<dbReference type="NCBIfam" id="TIGR01957">
    <property type="entry name" value="nuoB_fam"/>
    <property type="match status" value="1"/>
</dbReference>
<dbReference type="NCBIfam" id="NF005012">
    <property type="entry name" value="PRK06411.1"/>
    <property type="match status" value="1"/>
</dbReference>
<dbReference type="PANTHER" id="PTHR11995">
    <property type="entry name" value="NADH DEHYDROGENASE"/>
    <property type="match status" value="1"/>
</dbReference>
<dbReference type="PANTHER" id="PTHR11995:SF14">
    <property type="entry name" value="NADH DEHYDROGENASE [UBIQUINONE] IRON-SULFUR PROTEIN 7, MITOCHONDRIAL"/>
    <property type="match status" value="1"/>
</dbReference>
<dbReference type="Pfam" id="PF01058">
    <property type="entry name" value="Oxidored_q6"/>
    <property type="match status" value="1"/>
</dbReference>
<dbReference type="SUPFAM" id="SSF56770">
    <property type="entry name" value="HydA/Nqo6-like"/>
    <property type="match status" value="1"/>
</dbReference>
<dbReference type="PROSITE" id="PS01150">
    <property type="entry name" value="COMPLEX1_20K"/>
    <property type="match status" value="1"/>
</dbReference>
<feature type="chain" id="PRO_0000358578" description="NAD(P)H-quinone oxidoreductase subunit K, chloroplastic">
    <location>
        <begin position="1"/>
        <end position="225"/>
    </location>
</feature>
<feature type="binding site" evidence="1">
    <location>
        <position position="43"/>
    </location>
    <ligand>
        <name>[4Fe-4S] cluster</name>
        <dbReference type="ChEBI" id="CHEBI:49883"/>
    </ligand>
</feature>
<feature type="binding site" evidence="1">
    <location>
        <position position="44"/>
    </location>
    <ligand>
        <name>[4Fe-4S] cluster</name>
        <dbReference type="ChEBI" id="CHEBI:49883"/>
    </ligand>
</feature>
<feature type="binding site" evidence="1">
    <location>
        <position position="108"/>
    </location>
    <ligand>
        <name>[4Fe-4S] cluster</name>
        <dbReference type="ChEBI" id="CHEBI:49883"/>
    </ligand>
</feature>
<feature type="binding site" evidence="1">
    <location>
        <position position="139"/>
    </location>
    <ligand>
        <name>[4Fe-4S] cluster</name>
        <dbReference type="ChEBI" id="CHEBI:49883"/>
    </ligand>
</feature>
<comment type="function">
    <text evidence="1">NDH shuttles electrons from NAD(P)H:plastoquinone, via FMN and iron-sulfur (Fe-S) centers, to quinones in the photosynthetic chain and possibly in a chloroplast respiratory chain. The immediate electron acceptor for the enzyme in this species is believed to be plastoquinone. Couples the redox reaction to proton translocation, and thus conserves the redox energy in a proton gradient.</text>
</comment>
<comment type="catalytic activity">
    <reaction evidence="1">
        <text>a plastoquinone + NADH + (n+1) H(+)(in) = a plastoquinol + NAD(+) + n H(+)(out)</text>
        <dbReference type="Rhea" id="RHEA:42608"/>
        <dbReference type="Rhea" id="RHEA-COMP:9561"/>
        <dbReference type="Rhea" id="RHEA-COMP:9562"/>
        <dbReference type="ChEBI" id="CHEBI:15378"/>
        <dbReference type="ChEBI" id="CHEBI:17757"/>
        <dbReference type="ChEBI" id="CHEBI:57540"/>
        <dbReference type="ChEBI" id="CHEBI:57945"/>
        <dbReference type="ChEBI" id="CHEBI:62192"/>
    </reaction>
</comment>
<comment type="catalytic activity">
    <reaction evidence="1">
        <text>a plastoquinone + NADPH + (n+1) H(+)(in) = a plastoquinol + NADP(+) + n H(+)(out)</text>
        <dbReference type="Rhea" id="RHEA:42612"/>
        <dbReference type="Rhea" id="RHEA-COMP:9561"/>
        <dbReference type="Rhea" id="RHEA-COMP:9562"/>
        <dbReference type="ChEBI" id="CHEBI:15378"/>
        <dbReference type="ChEBI" id="CHEBI:17757"/>
        <dbReference type="ChEBI" id="CHEBI:57783"/>
        <dbReference type="ChEBI" id="CHEBI:58349"/>
        <dbReference type="ChEBI" id="CHEBI:62192"/>
    </reaction>
</comment>
<comment type="cofactor">
    <cofactor evidence="1">
        <name>[4Fe-4S] cluster</name>
        <dbReference type="ChEBI" id="CHEBI:49883"/>
    </cofactor>
    <text evidence="1">Binds 1 [4Fe-4S] cluster.</text>
</comment>
<comment type="subunit">
    <text evidence="1">NDH is composed of at least 16 different subunits, 5 of which are encoded in the nucleus.</text>
</comment>
<comment type="subcellular location">
    <subcellularLocation>
        <location evidence="1">Plastid</location>
        <location evidence="1">Chloroplast thylakoid membrane</location>
        <topology evidence="1">Peripheral membrane protein</topology>
        <orientation evidence="1">Stromal side</orientation>
    </subcellularLocation>
</comment>
<comment type="similarity">
    <text evidence="1">Belongs to the complex I 20 kDa subunit family.</text>
</comment>
<organism>
    <name type="scientific">Populus alba</name>
    <name type="common">White poplar</name>
    <dbReference type="NCBI Taxonomy" id="43335"/>
    <lineage>
        <taxon>Eukaryota</taxon>
        <taxon>Viridiplantae</taxon>
        <taxon>Streptophyta</taxon>
        <taxon>Embryophyta</taxon>
        <taxon>Tracheophyta</taxon>
        <taxon>Spermatophyta</taxon>
        <taxon>Magnoliopsida</taxon>
        <taxon>eudicotyledons</taxon>
        <taxon>Gunneridae</taxon>
        <taxon>Pentapetalae</taxon>
        <taxon>rosids</taxon>
        <taxon>fabids</taxon>
        <taxon>Malpighiales</taxon>
        <taxon>Salicaceae</taxon>
        <taxon>Saliceae</taxon>
        <taxon>Populus</taxon>
    </lineage>
</organism>
<gene>
    <name evidence="1" type="primary">ndhK</name>
</gene>